<evidence type="ECO:0000250" key="1"/>
<evidence type="ECO:0000250" key="2">
    <source>
        <dbReference type="UniProtKB" id="P05181"/>
    </source>
</evidence>
<evidence type="ECO:0000250" key="3">
    <source>
        <dbReference type="UniProtKB" id="P05182"/>
    </source>
</evidence>
<evidence type="ECO:0000305" key="4"/>
<comment type="function">
    <text evidence="2">A cytochrome P450 monooxygenase involved in the metabolism of fatty acids. Mechanistically, uses molecular oxygen inserting one oxygen atom into a substrate, and reducing the second into a water molecule, with two electrons provided by NADPH via cytochrome P450 reductase (NADPH--hemoprotein reductase). Catalyzes the hydroxylation of carbon-hydrogen bonds. Hydroxylates fatty acids specifically at the omega-1 position displaying the highest catalytic activity for saturated fatty acids. May be involved in the oxidative metabolism of xenobiotics.</text>
</comment>
<comment type="catalytic activity">
    <reaction evidence="2">
        <text>an organic molecule + reduced [NADPH--hemoprotein reductase] + O2 = an alcohol + oxidized [NADPH--hemoprotein reductase] + H2O + H(+)</text>
        <dbReference type="Rhea" id="RHEA:17149"/>
        <dbReference type="Rhea" id="RHEA-COMP:11964"/>
        <dbReference type="Rhea" id="RHEA-COMP:11965"/>
        <dbReference type="ChEBI" id="CHEBI:15377"/>
        <dbReference type="ChEBI" id="CHEBI:15378"/>
        <dbReference type="ChEBI" id="CHEBI:15379"/>
        <dbReference type="ChEBI" id="CHEBI:30879"/>
        <dbReference type="ChEBI" id="CHEBI:57618"/>
        <dbReference type="ChEBI" id="CHEBI:58210"/>
        <dbReference type="ChEBI" id="CHEBI:142491"/>
        <dbReference type="EC" id="1.14.14.1"/>
    </reaction>
    <physiologicalReaction direction="left-to-right" evidence="2">
        <dbReference type="Rhea" id="RHEA:17150"/>
    </physiologicalReaction>
</comment>
<comment type="catalytic activity">
    <reaction evidence="2">
        <text>(5Z,8Z,11Z)-eicosatrienoate + reduced [NADPH--hemoprotein reductase] + O2 = 19-hydroxy-(5Z,8Z,11Z)-eicosatrienoate + oxidized [NADPH--hemoprotein reductase] + H2O + H(+)</text>
        <dbReference type="Rhea" id="RHEA:50076"/>
        <dbReference type="Rhea" id="RHEA-COMP:11964"/>
        <dbReference type="Rhea" id="RHEA-COMP:11965"/>
        <dbReference type="ChEBI" id="CHEBI:15377"/>
        <dbReference type="ChEBI" id="CHEBI:15378"/>
        <dbReference type="ChEBI" id="CHEBI:15379"/>
        <dbReference type="ChEBI" id="CHEBI:57618"/>
        <dbReference type="ChEBI" id="CHEBI:58210"/>
        <dbReference type="ChEBI" id="CHEBI:78043"/>
        <dbReference type="ChEBI" id="CHEBI:132024"/>
    </reaction>
    <physiologicalReaction direction="left-to-right" evidence="2">
        <dbReference type="Rhea" id="RHEA:50077"/>
    </physiologicalReaction>
</comment>
<comment type="catalytic activity">
    <reaction evidence="2">
        <text>(5Z,8Z,11Z,14Z,17Z)-eicosapentaenoate + reduced [NADPH--hemoprotein reductase] + O2 = 19-hydroxy-(5Z,8Z,11Z,14Z,17Z)-eicosapentaenoate + oxidized [NADPH--hemoprotein reductase] + H2O + H(+)</text>
        <dbReference type="Rhea" id="RHEA:39787"/>
        <dbReference type="Rhea" id="RHEA-COMP:11964"/>
        <dbReference type="Rhea" id="RHEA-COMP:11965"/>
        <dbReference type="ChEBI" id="CHEBI:15377"/>
        <dbReference type="ChEBI" id="CHEBI:15378"/>
        <dbReference type="ChEBI" id="CHEBI:15379"/>
        <dbReference type="ChEBI" id="CHEBI:57618"/>
        <dbReference type="ChEBI" id="CHEBI:58210"/>
        <dbReference type="ChEBI" id="CHEBI:58562"/>
        <dbReference type="ChEBI" id="CHEBI:76636"/>
    </reaction>
    <physiologicalReaction direction="left-to-right" evidence="2">
        <dbReference type="Rhea" id="RHEA:39788"/>
    </physiologicalReaction>
</comment>
<comment type="catalytic activity">
    <reaction evidence="2">
        <text>(4Z,7Z,10Z,13Z,16Z,19Z)-docosahexaenoate + reduced [NADPH--hemoprotein reductase] + O2 = 21-hydroxy-(4Z,7Z,10Z,13Z,16Z,19Z)-docosahexaenoate + oxidized [NADPH--hemoprotein reductase] + H2O + H(+)</text>
        <dbReference type="Rhea" id="RHEA:50088"/>
        <dbReference type="Rhea" id="RHEA-COMP:11964"/>
        <dbReference type="Rhea" id="RHEA-COMP:11965"/>
        <dbReference type="ChEBI" id="CHEBI:15377"/>
        <dbReference type="ChEBI" id="CHEBI:15378"/>
        <dbReference type="ChEBI" id="CHEBI:15379"/>
        <dbReference type="ChEBI" id="CHEBI:57618"/>
        <dbReference type="ChEBI" id="CHEBI:58210"/>
        <dbReference type="ChEBI" id="CHEBI:77016"/>
        <dbReference type="ChEBI" id="CHEBI:132025"/>
    </reaction>
    <physiologicalReaction direction="left-to-right" evidence="2">
        <dbReference type="Rhea" id="RHEA:50089"/>
    </physiologicalReaction>
</comment>
<comment type="catalytic activity">
    <reaction evidence="2">
        <text>dodecanoate + reduced [NADPH--hemoprotein reductase] + O2 = 11-hydroxydodecanoate + oxidized [NADPH--hemoprotein reductase] + H2O + H(+)</text>
        <dbReference type="Rhea" id="RHEA:39751"/>
        <dbReference type="Rhea" id="RHEA-COMP:11964"/>
        <dbReference type="Rhea" id="RHEA-COMP:11965"/>
        <dbReference type="ChEBI" id="CHEBI:15377"/>
        <dbReference type="ChEBI" id="CHEBI:15378"/>
        <dbReference type="ChEBI" id="CHEBI:15379"/>
        <dbReference type="ChEBI" id="CHEBI:18262"/>
        <dbReference type="ChEBI" id="CHEBI:57618"/>
        <dbReference type="ChEBI" id="CHEBI:58210"/>
        <dbReference type="ChEBI" id="CHEBI:76628"/>
    </reaction>
    <physiologicalReaction direction="left-to-right" evidence="2">
        <dbReference type="Rhea" id="RHEA:39752"/>
    </physiologicalReaction>
</comment>
<comment type="catalytic activity">
    <reaction evidence="2">
        <text>tetradecanoate + reduced [NADPH--hemoprotein reductase] + O2 = 13-hydroxytetradecanoate + oxidized [NADPH--hemoprotein reductase] + H2O + H(+)</text>
        <dbReference type="Rhea" id="RHEA:50096"/>
        <dbReference type="Rhea" id="RHEA-COMP:11964"/>
        <dbReference type="Rhea" id="RHEA-COMP:11965"/>
        <dbReference type="ChEBI" id="CHEBI:15377"/>
        <dbReference type="ChEBI" id="CHEBI:15378"/>
        <dbReference type="ChEBI" id="CHEBI:15379"/>
        <dbReference type="ChEBI" id="CHEBI:30807"/>
        <dbReference type="ChEBI" id="CHEBI:57618"/>
        <dbReference type="ChEBI" id="CHEBI:58210"/>
        <dbReference type="ChEBI" id="CHEBI:132031"/>
    </reaction>
    <physiologicalReaction direction="left-to-right" evidence="2">
        <dbReference type="Rhea" id="RHEA:50097"/>
    </physiologicalReaction>
</comment>
<comment type="catalytic activity">
    <reaction evidence="2">
        <text>4-nitrophenol + NADPH + O2 + H(+) = 4-nitrocatechol + NADP(+) + H2O</text>
        <dbReference type="Rhea" id="RHEA:26205"/>
        <dbReference type="ChEBI" id="CHEBI:15377"/>
        <dbReference type="ChEBI" id="CHEBI:15378"/>
        <dbReference type="ChEBI" id="CHEBI:15379"/>
        <dbReference type="ChEBI" id="CHEBI:57730"/>
        <dbReference type="ChEBI" id="CHEBI:57783"/>
        <dbReference type="ChEBI" id="CHEBI:57917"/>
        <dbReference type="ChEBI" id="CHEBI:58349"/>
        <dbReference type="EC" id="1.14.13.n7"/>
    </reaction>
    <physiologicalReaction direction="left-to-right" evidence="2">
        <dbReference type="Rhea" id="RHEA:26206"/>
    </physiologicalReaction>
</comment>
<comment type="cofactor">
    <cofactor evidence="1">
        <name>heme</name>
        <dbReference type="ChEBI" id="CHEBI:30413"/>
    </cofactor>
</comment>
<comment type="activity regulation">
    <text evidence="2">The omega-1 hydroxylase activity is stimulated by cytochrome b5.</text>
</comment>
<comment type="pathway">
    <text evidence="2">Lipid metabolism; fatty acid metabolism.</text>
</comment>
<comment type="subunit">
    <text evidence="3">Interacts with chaperones HSP70 and HSP90; this interaction is required for initial targeting to mitochondria.</text>
</comment>
<comment type="subcellular location">
    <subcellularLocation>
        <location evidence="3">Endoplasmic reticulum membrane</location>
        <topology evidence="3">Peripheral membrane protein</topology>
    </subcellularLocation>
    <subcellularLocation>
        <location evidence="3">Microsome membrane</location>
        <topology evidence="3">Peripheral membrane protein</topology>
    </subcellularLocation>
    <subcellularLocation>
        <location evidence="3">Mitochondrion inner membrane</location>
        <topology evidence="3">Peripheral membrane protein</topology>
    </subcellularLocation>
    <text evidence="3">Post-translationally targeted to mitochondria. TOMM70 is required for the translocation across the mitochondrial outer membrane. After translocation into the matrix, associates with the inner membrane as a membrane extrinsic protein.</text>
</comment>
<comment type="similarity">
    <text evidence="4">Belongs to the cytochrome P450 family.</text>
</comment>
<keyword id="KW-0256">Endoplasmic reticulum</keyword>
<keyword id="KW-0276">Fatty acid metabolism</keyword>
<keyword id="KW-0349">Heme</keyword>
<keyword id="KW-0408">Iron</keyword>
<keyword id="KW-0443">Lipid metabolism</keyword>
<keyword id="KW-0472">Membrane</keyword>
<keyword id="KW-0479">Metal-binding</keyword>
<keyword id="KW-0492">Microsome</keyword>
<keyword id="KW-0496">Mitochondrion</keyword>
<keyword id="KW-0999">Mitochondrion inner membrane</keyword>
<keyword id="KW-0503">Monooxygenase</keyword>
<keyword id="KW-0521">NADP</keyword>
<keyword id="KW-0560">Oxidoreductase</keyword>
<keyword id="KW-1185">Reference proteome</keyword>
<gene>
    <name type="primary">CYP2E1</name>
    <name type="synonym">CYP2E</name>
</gene>
<sequence length="493" mass="56647">MAVFGVTIALLVWVATLLIVSIWKQIYSSWNLPPGPFPLPILGNIFQLDLKNIPKSLTKLAERFGPVFTLHLGSKRIVVLHGYKAVKEVLLNHKNEFSGRGDIPVFQEYMNKGIIFNNGPTWKDVRRFSLSILRDYGMGKQGNEARIQREAHFLMEELKKTNGQPFDPTFLVGCAPFNVISDILFHKRFDYNDKTCLRLMSLFNENFYLLSTPWIQAYNNFENYLRYLPGSHRKIMKNASEIRQYTLAKAKEHLQSLDSSCPRDVTDCLLIEMEKEKDSQEPMYTMENISVTLADLFFAGTETTSTTLRYGLLILMKYPEVEEKLHEEIDRVIGPSRVPVFKDRLEMPYMDAVVHEIQRFISLIPSNLPHEATRDTMFRGYVIPKGTVVIPTLDSLLYDSQEFPDPEKFKPEHFLNENGKFKYSDHFKAFSAGKRVCVGEGLARMELFLLLTAILQHFNLKSLVDPKDIDLNPVTIGFGCVPPEFKLCVIPRS</sequence>
<organism>
    <name type="scientific">Mesocricetus auratus</name>
    <name type="common">Golden hamster</name>
    <dbReference type="NCBI Taxonomy" id="10036"/>
    <lineage>
        <taxon>Eukaryota</taxon>
        <taxon>Metazoa</taxon>
        <taxon>Chordata</taxon>
        <taxon>Craniata</taxon>
        <taxon>Vertebrata</taxon>
        <taxon>Euteleostomi</taxon>
        <taxon>Mammalia</taxon>
        <taxon>Eutheria</taxon>
        <taxon>Euarchontoglires</taxon>
        <taxon>Glires</taxon>
        <taxon>Rodentia</taxon>
        <taxon>Myomorpha</taxon>
        <taxon>Muroidea</taxon>
        <taxon>Cricetidae</taxon>
        <taxon>Cricetinae</taxon>
        <taxon>Mesocricetus</taxon>
    </lineage>
</organism>
<feature type="chain" id="PRO_0000051754" description="Cytochrome P450 2E1">
    <location>
        <begin position="1"/>
        <end position="493"/>
    </location>
</feature>
<feature type="binding site" evidence="1">
    <location>
        <begin position="298"/>
        <end position="303"/>
    </location>
    <ligand>
        <name>substrate</name>
    </ligand>
</feature>
<feature type="binding site" description="axial binding residue" evidence="1">
    <location>
        <position position="437"/>
    </location>
    <ligand>
        <name>heme</name>
        <dbReference type="ChEBI" id="CHEBI:30413"/>
    </ligand>
    <ligandPart>
        <name>Fe</name>
        <dbReference type="ChEBI" id="CHEBI:18248"/>
    </ligandPart>
</feature>
<protein>
    <recommendedName>
        <fullName>Cytochrome P450 2E1</fullName>
        <ecNumber evidence="2">1.14.14.1</ecNumber>
    </recommendedName>
    <alternativeName>
        <fullName>4-nitrophenol 2-hydroxylase</fullName>
        <ecNumber evidence="2">1.14.13.n7</ecNumber>
    </alternativeName>
    <alternativeName>
        <fullName>CYPIIE1</fullName>
    </alternativeName>
    <alternativeName>
        <fullName>Cytochrome P450-J</fullName>
    </alternativeName>
</protein>
<accession>P51581</accession>
<proteinExistence type="evidence at transcript level"/>
<reference key="1">
    <citation type="journal article" date="1994" name="Biochim. Biophys. Acta">
        <title>Molecular cloning and sequence analysis of hamster CYP2E1.</title>
        <authorList>
            <person name="Sakuma T."/>
            <person name="Takai M."/>
            <person name="Yokoi T."/>
            <person name="Kamataki T."/>
        </authorList>
    </citation>
    <scope>NUCLEOTIDE SEQUENCE [MRNA]</scope>
    <source>
        <tissue>Liver</tissue>
    </source>
</reference>
<dbReference type="EC" id="1.14.14.1" evidence="2"/>
<dbReference type="EC" id="1.14.13.n7" evidence="2"/>
<dbReference type="EMBL" id="D17449">
    <property type="protein sequence ID" value="BAA04265.1"/>
    <property type="molecule type" value="mRNA"/>
</dbReference>
<dbReference type="PIR" id="I48159">
    <property type="entry name" value="I48159"/>
</dbReference>
<dbReference type="RefSeq" id="NP_001268258.1">
    <property type="nucleotide sequence ID" value="NM_001281329.1"/>
</dbReference>
<dbReference type="SMR" id="P51581"/>
<dbReference type="STRING" id="10036.ENSMAUP00000002153"/>
<dbReference type="Ensembl" id="ENSMAUT00000002300">
    <property type="protein sequence ID" value="ENSMAUP00000002153"/>
    <property type="gene ID" value="ENSMAUG00000001706"/>
</dbReference>
<dbReference type="GeneID" id="101843716"/>
<dbReference type="KEGG" id="maua:101843716"/>
<dbReference type="eggNOG" id="KOG0156">
    <property type="taxonomic scope" value="Eukaryota"/>
</dbReference>
<dbReference type="OrthoDB" id="1103324at2759"/>
<dbReference type="UniPathway" id="UPA00199"/>
<dbReference type="Proteomes" id="UP000189706">
    <property type="component" value="Unplaced"/>
</dbReference>
<dbReference type="GO" id="GO:0005789">
    <property type="term" value="C:endoplasmic reticulum membrane"/>
    <property type="evidence" value="ECO:0007669"/>
    <property type="project" value="UniProtKB-SubCell"/>
</dbReference>
<dbReference type="GO" id="GO:0005743">
    <property type="term" value="C:mitochondrial inner membrane"/>
    <property type="evidence" value="ECO:0000250"/>
    <property type="project" value="UniProtKB"/>
</dbReference>
<dbReference type="GO" id="GO:0018601">
    <property type="term" value="F:4-nitrophenol 2-monooxygenase activity"/>
    <property type="evidence" value="ECO:0007669"/>
    <property type="project" value="Ensembl"/>
</dbReference>
<dbReference type="GO" id="GO:0008392">
    <property type="term" value="F:arachidonate epoxygenase activity"/>
    <property type="evidence" value="ECO:0007669"/>
    <property type="project" value="TreeGrafter"/>
</dbReference>
<dbReference type="GO" id="GO:0019899">
    <property type="term" value="F:enzyme binding"/>
    <property type="evidence" value="ECO:0007669"/>
    <property type="project" value="Ensembl"/>
</dbReference>
<dbReference type="GO" id="GO:0020037">
    <property type="term" value="F:heme binding"/>
    <property type="evidence" value="ECO:0000250"/>
    <property type="project" value="UniProtKB"/>
</dbReference>
<dbReference type="GO" id="GO:0030544">
    <property type="term" value="F:Hsp70 protein binding"/>
    <property type="evidence" value="ECO:0000250"/>
    <property type="project" value="UniProtKB"/>
</dbReference>
<dbReference type="GO" id="GO:0051879">
    <property type="term" value="F:Hsp90 protein binding"/>
    <property type="evidence" value="ECO:0000250"/>
    <property type="project" value="UniProtKB"/>
</dbReference>
<dbReference type="GO" id="GO:0005506">
    <property type="term" value="F:iron ion binding"/>
    <property type="evidence" value="ECO:0007669"/>
    <property type="project" value="InterPro"/>
</dbReference>
<dbReference type="GO" id="GO:0120319">
    <property type="term" value="F:long-chain fatty acid omega-1 hydroxylase activity"/>
    <property type="evidence" value="ECO:0007669"/>
    <property type="project" value="Ensembl"/>
</dbReference>
<dbReference type="GO" id="GO:0018960">
    <property type="term" value="P:4-nitrophenol metabolic process"/>
    <property type="evidence" value="ECO:0007669"/>
    <property type="project" value="Ensembl"/>
</dbReference>
<dbReference type="GO" id="GO:0019373">
    <property type="term" value="P:epoxygenase P450 pathway"/>
    <property type="evidence" value="ECO:0007669"/>
    <property type="project" value="TreeGrafter"/>
</dbReference>
<dbReference type="GO" id="GO:0002933">
    <property type="term" value="P:lipid hydroxylation"/>
    <property type="evidence" value="ECO:0007669"/>
    <property type="project" value="Ensembl"/>
</dbReference>
<dbReference type="GO" id="GO:0016098">
    <property type="term" value="P:monoterpenoid metabolic process"/>
    <property type="evidence" value="ECO:0007669"/>
    <property type="project" value="Ensembl"/>
</dbReference>
<dbReference type="GO" id="GO:0009617">
    <property type="term" value="P:response to bacterium"/>
    <property type="evidence" value="ECO:0007669"/>
    <property type="project" value="Ensembl"/>
</dbReference>
<dbReference type="GO" id="GO:0008202">
    <property type="term" value="P:steroid metabolic process"/>
    <property type="evidence" value="ECO:0007669"/>
    <property type="project" value="Ensembl"/>
</dbReference>
<dbReference type="GO" id="GO:0006805">
    <property type="term" value="P:xenobiotic metabolic process"/>
    <property type="evidence" value="ECO:0007669"/>
    <property type="project" value="Ensembl"/>
</dbReference>
<dbReference type="CDD" id="cd20665">
    <property type="entry name" value="CYP2C-like"/>
    <property type="match status" value="1"/>
</dbReference>
<dbReference type="FunFam" id="1.10.630.10:FF:000001">
    <property type="entry name" value="Cytochrome P450, family 2"/>
    <property type="match status" value="1"/>
</dbReference>
<dbReference type="Gene3D" id="1.10.630.10">
    <property type="entry name" value="Cytochrome P450"/>
    <property type="match status" value="1"/>
</dbReference>
<dbReference type="InterPro" id="IPR001128">
    <property type="entry name" value="Cyt_P450"/>
</dbReference>
<dbReference type="InterPro" id="IPR017972">
    <property type="entry name" value="Cyt_P450_CS"/>
</dbReference>
<dbReference type="InterPro" id="IPR002401">
    <property type="entry name" value="Cyt_P450_E_grp-I"/>
</dbReference>
<dbReference type="InterPro" id="IPR008070">
    <property type="entry name" value="Cyt_P450_E_grp-I_CYP2E-like"/>
</dbReference>
<dbReference type="InterPro" id="IPR036396">
    <property type="entry name" value="Cyt_P450_sf"/>
</dbReference>
<dbReference type="InterPro" id="IPR050182">
    <property type="entry name" value="Cytochrome_P450_fam2"/>
</dbReference>
<dbReference type="PANTHER" id="PTHR24300:SF356">
    <property type="entry name" value="CYTOCHROME P450 2E1"/>
    <property type="match status" value="1"/>
</dbReference>
<dbReference type="PANTHER" id="PTHR24300">
    <property type="entry name" value="CYTOCHROME P450 508A4-RELATED"/>
    <property type="match status" value="1"/>
</dbReference>
<dbReference type="Pfam" id="PF00067">
    <property type="entry name" value="p450"/>
    <property type="match status" value="1"/>
</dbReference>
<dbReference type="PRINTS" id="PR00463">
    <property type="entry name" value="EP450I"/>
</dbReference>
<dbReference type="PRINTS" id="PR01687">
    <property type="entry name" value="EP450ICYP2E"/>
</dbReference>
<dbReference type="PRINTS" id="PR00385">
    <property type="entry name" value="P450"/>
</dbReference>
<dbReference type="SUPFAM" id="SSF48264">
    <property type="entry name" value="Cytochrome P450"/>
    <property type="match status" value="1"/>
</dbReference>
<dbReference type="PROSITE" id="PS00086">
    <property type="entry name" value="CYTOCHROME_P450"/>
    <property type="match status" value="1"/>
</dbReference>
<name>CP2E1_MESAU</name>